<gene>
    <name type="ORF">TRV_05367</name>
</gene>
<comment type="function">
    <text evidence="1">Probable secreted metalloprotease that shows high activities on basic nuclear substrates such as histone and protamine (By similarity). May be involved in virulence.</text>
</comment>
<comment type="catalytic activity">
    <reaction>
        <text>Preferential cleavage of bonds with hydrophobic residues in P1'. Also 3-Asn-|-Gln-4 and 8-Gly-|-Ser-9 bonds in insulin B chain.</text>
        <dbReference type="EC" id="3.4.24.39"/>
    </reaction>
</comment>
<comment type="cofactor">
    <cofactor evidence="1">
        <name>Zn(2+)</name>
        <dbReference type="ChEBI" id="CHEBI:29105"/>
    </cofactor>
    <text evidence="1">Binds 1 zinc ion per subunit.</text>
</comment>
<comment type="subcellular location">
    <subcellularLocation>
        <location evidence="4">Secreted</location>
    </subcellularLocation>
</comment>
<comment type="similarity">
    <text evidence="4">Belongs to the peptidase M35 family.</text>
</comment>
<name>NPIIB_TRIVH</name>
<protein>
    <recommendedName>
        <fullName>Probable neutral protease 2 homolog TRV_05367</fullName>
        <ecNumber>3.4.24.39</ecNumber>
    </recommendedName>
    <alternativeName>
        <fullName>Deuterolysin TRV_05367</fullName>
    </alternativeName>
</protein>
<accession>D4DE03</accession>
<organism>
    <name type="scientific">Trichophyton verrucosum (strain HKI 0517)</name>
    <dbReference type="NCBI Taxonomy" id="663202"/>
    <lineage>
        <taxon>Eukaryota</taxon>
        <taxon>Fungi</taxon>
        <taxon>Dikarya</taxon>
        <taxon>Ascomycota</taxon>
        <taxon>Pezizomycotina</taxon>
        <taxon>Eurotiomycetes</taxon>
        <taxon>Eurotiomycetidae</taxon>
        <taxon>Onygenales</taxon>
        <taxon>Arthrodermataceae</taxon>
        <taxon>Trichophyton</taxon>
    </lineage>
</organism>
<evidence type="ECO:0000250" key="1"/>
<evidence type="ECO:0000255" key="2"/>
<evidence type="ECO:0000255" key="3">
    <source>
        <dbReference type="PROSITE-ProRule" id="PRU10095"/>
    </source>
</evidence>
<evidence type="ECO:0000305" key="4"/>
<feature type="signal peptide" evidence="2">
    <location>
        <begin position="1"/>
        <end position="19"/>
    </location>
</feature>
<feature type="propeptide" id="PRO_0000397744" evidence="1">
    <location>
        <begin position="20"/>
        <end position="189"/>
    </location>
</feature>
<feature type="chain" id="PRO_0000397745" description="Probable neutral protease 2 homolog TRV_05367">
    <location>
        <begin position="190"/>
        <end position="374"/>
    </location>
</feature>
<feature type="active site" evidence="3">
    <location>
        <position position="318"/>
    </location>
</feature>
<feature type="binding site" evidence="3">
    <location>
        <position position="317"/>
    </location>
    <ligand>
        <name>Zn(2+)</name>
        <dbReference type="ChEBI" id="CHEBI:29105"/>
        <note>catalytic</note>
    </ligand>
</feature>
<feature type="binding site" evidence="3">
    <location>
        <position position="321"/>
    </location>
    <ligand>
        <name>Zn(2+)</name>
        <dbReference type="ChEBI" id="CHEBI:29105"/>
        <note>catalytic</note>
    </ligand>
</feature>
<feature type="binding site" evidence="3">
    <location>
        <position position="332"/>
    </location>
    <ligand>
        <name>Zn(2+)</name>
        <dbReference type="ChEBI" id="CHEBI:29105"/>
        <note>catalytic</note>
    </ligand>
</feature>
<feature type="disulfide bond" evidence="1">
    <location>
        <begin position="197"/>
        <end position="267"/>
    </location>
</feature>
<feature type="disulfide bond" evidence="1">
    <location>
        <begin position="274"/>
        <end position="292"/>
    </location>
</feature>
<sequence>MQVIVALAALGSLAAPALGFSIPRGVPVSQSMIDVKLSSTGNSMVKATITNNGNRALNLLKFHTIMDSNPTRKVSIESEDGKEIQFTGMMPTYKEKDLKPSYFIFLPPKGTVEHSFDIARTHDLSRGGKFTLKAEGMVPIAEENGTEITGAAKYHSNELHMTIDGEKAASVENAFGIVKRGPLTRINKRTSIDMQSCGNNQELQALTAALKASAQLSSMSAQAVSQNQDKYMEYFKDPQYMQTVQSRFQAVAQESSSTTGGGTTYHCSDTMGGCEEGVLAYTLPSQNEVFNCPIYYSDLPPLSNECHAQDQATTTLHELTHNPAVQEPFCEDNGYGYERATALSAEKAVQNADSYALFANGKLNLITLMLIDPD</sequence>
<keyword id="KW-0165">Cleavage on pair of basic residues</keyword>
<keyword id="KW-1015">Disulfide bond</keyword>
<keyword id="KW-0378">Hydrolase</keyword>
<keyword id="KW-0479">Metal-binding</keyword>
<keyword id="KW-0482">Metalloprotease</keyword>
<keyword id="KW-0645">Protease</keyword>
<keyword id="KW-0964">Secreted</keyword>
<keyword id="KW-0732">Signal</keyword>
<keyword id="KW-0843">Virulence</keyword>
<keyword id="KW-0862">Zinc</keyword>
<keyword id="KW-0865">Zymogen</keyword>
<proteinExistence type="inferred from homology"/>
<reference key="1">
    <citation type="journal article" date="2011" name="Genome Biol.">
        <title>Comparative and functional genomics provide insights into the pathogenicity of dermatophytic fungi.</title>
        <authorList>
            <person name="Burmester A."/>
            <person name="Shelest E."/>
            <person name="Gloeckner G."/>
            <person name="Heddergott C."/>
            <person name="Schindler S."/>
            <person name="Staib P."/>
            <person name="Heidel A."/>
            <person name="Felder M."/>
            <person name="Petzold A."/>
            <person name="Szafranski K."/>
            <person name="Feuermann M."/>
            <person name="Pedruzzi I."/>
            <person name="Priebe S."/>
            <person name="Groth M."/>
            <person name="Winkler R."/>
            <person name="Li W."/>
            <person name="Kniemeyer O."/>
            <person name="Schroeckh V."/>
            <person name="Hertweck C."/>
            <person name="Hube B."/>
            <person name="White T.C."/>
            <person name="Platzer M."/>
            <person name="Guthke R."/>
            <person name="Heitman J."/>
            <person name="Woestemeyer J."/>
            <person name="Zipfel P.F."/>
            <person name="Monod M."/>
            <person name="Brakhage A.A."/>
        </authorList>
    </citation>
    <scope>NUCLEOTIDE SEQUENCE [LARGE SCALE GENOMIC DNA]</scope>
    <source>
        <strain>HKI 0517</strain>
    </source>
</reference>
<dbReference type="EC" id="3.4.24.39"/>
<dbReference type="EMBL" id="ACYE01000281">
    <property type="protein sequence ID" value="EFE39920.1"/>
    <property type="molecule type" value="Genomic_DNA"/>
</dbReference>
<dbReference type="RefSeq" id="XP_003020538.1">
    <property type="nucleotide sequence ID" value="XM_003020492.1"/>
</dbReference>
<dbReference type="SMR" id="D4DE03"/>
<dbReference type="MEROPS" id="M35.002"/>
<dbReference type="GeneID" id="9577237"/>
<dbReference type="KEGG" id="tve:TRV_05367"/>
<dbReference type="HOGENOM" id="CLU_039313_1_0_1"/>
<dbReference type="OrthoDB" id="4469at34384"/>
<dbReference type="Proteomes" id="UP000008383">
    <property type="component" value="Unassembled WGS sequence"/>
</dbReference>
<dbReference type="GO" id="GO:0005576">
    <property type="term" value="C:extracellular region"/>
    <property type="evidence" value="ECO:0007669"/>
    <property type="project" value="UniProtKB-SubCell"/>
</dbReference>
<dbReference type="GO" id="GO:0046872">
    <property type="term" value="F:metal ion binding"/>
    <property type="evidence" value="ECO:0007669"/>
    <property type="project" value="UniProtKB-KW"/>
</dbReference>
<dbReference type="GO" id="GO:0004222">
    <property type="term" value="F:metalloendopeptidase activity"/>
    <property type="evidence" value="ECO:0007669"/>
    <property type="project" value="InterPro"/>
</dbReference>
<dbReference type="GO" id="GO:0006508">
    <property type="term" value="P:proteolysis"/>
    <property type="evidence" value="ECO:0007669"/>
    <property type="project" value="UniProtKB-KW"/>
</dbReference>
<dbReference type="CDD" id="cd11008">
    <property type="entry name" value="M35_deuterolysin_like"/>
    <property type="match status" value="1"/>
</dbReference>
<dbReference type="Gene3D" id="2.60.40.2970">
    <property type="match status" value="1"/>
</dbReference>
<dbReference type="Gene3D" id="3.40.390.10">
    <property type="entry name" value="Collagenase (Catalytic Domain)"/>
    <property type="match status" value="1"/>
</dbReference>
<dbReference type="InterPro" id="IPR050414">
    <property type="entry name" value="Fungal_M35_metalloproteases"/>
</dbReference>
<dbReference type="InterPro" id="IPR024079">
    <property type="entry name" value="MetalloPept_cat_dom_sf"/>
</dbReference>
<dbReference type="InterPro" id="IPR001384">
    <property type="entry name" value="Peptidase_M35"/>
</dbReference>
<dbReference type="PANTHER" id="PTHR37016">
    <property type="match status" value="1"/>
</dbReference>
<dbReference type="PANTHER" id="PTHR37016:SF3">
    <property type="entry name" value="NEUTRAL PROTEASE 2-RELATED"/>
    <property type="match status" value="1"/>
</dbReference>
<dbReference type="Pfam" id="PF02102">
    <property type="entry name" value="Peptidase_M35"/>
    <property type="match status" value="1"/>
</dbReference>
<dbReference type="PRINTS" id="PR00768">
    <property type="entry name" value="DEUTEROLYSIN"/>
</dbReference>
<dbReference type="SUPFAM" id="SSF55486">
    <property type="entry name" value="Metalloproteases ('zincins'), catalytic domain"/>
    <property type="match status" value="1"/>
</dbReference>
<dbReference type="PROSITE" id="PS00142">
    <property type="entry name" value="ZINC_PROTEASE"/>
    <property type="match status" value="1"/>
</dbReference>